<keyword id="KW-1003">Cell membrane</keyword>
<keyword id="KW-0325">Glycoprotein</keyword>
<keyword id="KW-0472">Membrane</keyword>
<keyword id="KW-1267">Proteomics identification</keyword>
<keyword id="KW-1185">Reference proteome</keyword>
<keyword id="KW-0812">Transmembrane</keyword>
<keyword id="KW-1133">Transmembrane helix</keyword>
<protein>
    <recommendedName>
        <fullName>Noncompact myelin-associated protein</fullName>
    </recommendedName>
    <alternativeName>
        <fullName>Myelin protein of 11 kDa</fullName>
        <shortName>MP11</shortName>
    </alternativeName>
</protein>
<organism>
    <name type="scientific">Homo sapiens</name>
    <name type="common">Human</name>
    <dbReference type="NCBI Taxonomy" id="9606"/>
    <lineage>
        <taxon>Eukaryota</taxon>
        <taxon>Metazoa</taxon>
        <taxon>Chordata</taxon>
        <taxon>Craniata</taxon>
        <taxon>Vertebrata</taxon>
        <taxon>Euteleostomi</taxon>
        <taxon>Mammalia</taxon>
        <taxon>Eutheria</taxon>
        <taxon>Euarchontoglires</taxon>
        <taxon>Primates</taxon>
        <taxon>Haplorrhini</taxon>
        <taxon>Catarrhini</taxon>
        <taxon>Hominidae</taxon>
        <taxon>Homo</taxon>
    </lineage>
</organism>
<proteinExistence type="evidence at protein level"/>
<evidence type="ECO:0000250" key="1"/>
<evidence type="ECO:0000255" key="2"/>
<evidence type="ECO:0000256" key="3">
    <source>
        <dbReference type="SAM" id="MobiDB-lite"/>
    </source>
</evidence>
<dbReference type="EMBL" id="AL445686">
    <property type="status" value="NOT_ANNOTATED_CDS"/>
    <property type="molecule type" value="Genomic_DNA"/>
</dbReference>
<dbReference type="EMBL" id="BC127785">
    <property type="protein sequence ID" value="AAI27786.1"/>
    <property type="molecule type" value="mRNA"/>
</dbReference>
<dbReference type="EMBL" id="BC147014">
    <property type="protein sequence ID" value="AAI47015.1"/>
    <property type="molecule type" value="mRNA"/>
</dbReference>
<dbReference type="EMBL" id="BC147015">
    <property type="protein sequence ID" value="AAI47016.1"/>
    <property type="molecule type" value="mRNA"/>
</dbReference>
<dbReference type="CCDS" id="CCDS30632.1"/>
<dbReference type="RefSeq" id="NP_001010980.1">
    <property type="nucleotide sequence ID" value="NM_001010980.5"/>
</dbReference>
<dbReference type="RefSeq" id="XP_005245929.1">
    <property type="nucleotide sequence ID" value="XM_005245872.4"/>
</dbReference>
<dbReference type="RefSeq" id="XP_011539765.1">
    <property type="nucleotide sequence ID" value="XM_011541463.3"/>
</dbReference>
<dbReference type="RefSeq" id="XP_054192549.1">
    <property type="nucleotide sequence ID" value="XM_054336574.1"/>
</dbReference>
<dbReference type="SMR" id="Q5T1S8"/>
<dbReference type="FunCoup" id="Q5T1S8">
    <property type="interactions" value="2"/>
</dbReference>
<dbReference type="STRING" id="9606.ENSP00000363513"/>
<dbReference type="GlyGen" id="Q5T1S8">
    <property type="glycosylation" value="1 site"/>
</dbReference>
<dbReference type="BioMuta" id="NCMAP"/>
<dbReference type="DMDM" id="74744510"/>
<dbReference type="jPOST" id="Q5T1S8"/>
<dbReference type="MassIVE" id="Q5T1S8"/>
<dbReference type="PaxDb" id="9606-ENSP00000363513"/>
<dbReference type="PeptideAtlas" id="Q5T1S8"/>
<dbReference type="Antibodypedia" id="2689">
    <property type="antibodies" value="65 antibodies from 11 providers"/>
</dbReference>
<dbReference type="DNASU" id="400746"/>
<dbReference type="Ensembl" id="ENST00000374392.3">
    <property type="protein sequence ID" value="ENSP00000363513.2"/>
    <property type="gene ID" value="ENSG00000184454.7"/>
</dbReference>
<dbReference type="GeneID" id="400746"/>
<dbReference type="KEGG" id="hsa:400746"/>
<dbReference type="MANE-Select" id="ENST00000374392.3">
    <property type="protein sequence ID" value="ENSP00000363513.2"/>
    <property type="RefSeq nucleotide sequence ID" value="NM_001010980.5"/>
    <property type="RefSeq protein sequence ID" value="NP_001010980.1"/>
</dbReference>
<dbReference type="UCSC" id="uc001bjk.3">
    <property type="organism name" value="human"/>
</dbReference>
<dbReference type="AGR" id="HGNC:29332"/>
<dbReference type="CTD" id="400746"/>
<dbReference type="DisGeNET" id="400746"/>
<dbReference type="GeneCards" id="NCMAP"/>
<dbReference type="HGNC" id="HGNC:29332">
    <property type="gene designation" value="NCMAP"/>
</dbReference>
<dbReference type="HPA" id="ENSG00000184454">
    <property type="expression patterns" value="Tissue enhanced (gallbladder, pancreas, salivary gland)"/>
</dbReference>
<dbReference type="neXtProt" id="NX_Q5T1S8"/>
<dbReference type="OpenTargets" id="ENSG00000184454"/>
<dbReference type="PharmGKB" id="PA142672448"/>
<dbReference type="VEuPathDB" id="HostDB:ENSG00000184454"/>
<dbReference type="eggNOG" id="ENOG502S4WJ">
    <property type="taxonomic scope" value="Eukaryota"/>
</dbReference>
<dbReference type="GeneTree" id="ENSGT00390000004116"/>
<dbReference type="HOGENOM" id="CLU_176667_0_0_1"/>
<dbReference type="InParanoid" id="Q5T1S8"/>
<dbReference type="OMA" id="YNRKMRI"/>
<dbReference type="OrthoDB" id="9950350at2759"/>
<dbReference type="PAN-GO" id="Q5T1S8">
    <property type="GO annotations" value="4 GO annotations based on evolutionary models"/>
</dbReference>
<dbReference type="PhylomeDB" id="Q5T1S8"/>
<dbReference type="TreeFam" id="TF336902"/>
<dbReference type="PathwayCommons" id="Q5T1S8"/>
<dbReference type="BioGRID-ORCS" id="400746">
    <property type="hits" value="12 hits in 1145 CRISPR screens"/>
</dbReference>
<dbReference type="ChiTaRS" id="NCMAP">
    <property type="organism name" value="human"/>
</dbReference>
<dbReference type="GenomeRNAi" id="400746"/>
<dbReference type="Pharos" id="Q5T1S8">
    <property type="development level" value="Tbio"/>
</dbReference>
<dbReference type="PRO" id="PR:Q5T1S8"/>
<dbReference type="Proteomes" id="UP000005640">
    <property type="component" value="Chromosome 1"/>
</dbReference>
<dbReference type="RNAct" id="Q5T1S8">
    <property type="molecule type" value="protein"/>
</dbReference>
<dbReference type="Bgee" id="ENSG00000184454">
    <property type="expression patterns" value="Expressed in tibial nerve and 81 other cell types or tissues"/>
</dbReference>
<dbReference type="GO" id="GO:0033270">
    <property type="term" value="C:paranode region of axon"/>
    <property type="evidence" value="ECO:0000250"/>
    <property type="project" value="UniProtKB"/>
</dbReference>
<dbReference type="GO" id="GO:0005886">
    <property type="term" value="C:plasma membrane"/>
    <property type="evidence" value="ECO:0000250"/>
    <property type="project" value="UniProtKB"/>
</dbReference>
<dbReference type="GO" id="GO:0043220">
    <property type="term" value="C:Schmidt-Lanterman incisure"/>
    <property type="evidence" value="ECO:0000250"/>
    <property type="project" value="UniProtKB"/>
</dbReference>
<dbReference type="GO" id="GO:0019911">
    <property type="term" value="F:structural constituent of myelin sheath"/>
    <property type="evidence" value="ECO:0000250"/>
    <property type="project" value="UniProtKB"/>
</dbReference>
<dbReference type="GO" id="GO:0032290">
    <property type="term" value="P:peripheral nervous system myelin formation"/>
    <property type="evidence" value="ECO:0000250"/>
    <property type="project" value="UniProtKB"/>
</dbReference>
<dbReference type="GO" id="GO:0031643">
    <property type="term" value="P:positive regulation of myelination"/>
    <property type="evidence" value="ECO:0000250"/>
    <property type="project" value="UniProtKB"/>
</dbReference>
<dbReference type="InterPro" id="IPR038940">
    <property type="entry name" value="NCMAP"/>
</dbReference>
<dbReference type="PANTHER" id="PTHR35974">
    <property type="entry name" value="NONCOMPACT MYELIN-ASSOCIATED PROTEIN"/>
    <property type="match status" value="1"/>
</dbReference>
<dbReference type="PANTHER" id="PTHR35974:SF1">
    <property type="entry name" value="NONCOMPACT MYELIN-ASSOCIATED PROTEIN"/>
    <property type="match status" value="1"/>
</dbReference>
<name>NCMAP_HUMAN</name>
<reference key="1">
    <citation type="journal article" date="2006" name="Nature">
        <title>The DNA sequence and biological annotation of human chromosome 1.</title>
        <authorList>
            <person name="Gregory S.G."/>
            <person name="Barlow K.F."/>
            <person name="McLay K.E."/>
            <person name="Kaul R."/>
            <person name="Swarbreck D."/>
            <person name="Dunham A."/>
            <person name="Scott C.E."/>
            <person name="Howe K.L."/>
            <person name="Woodfine K."/>
            <person name="Spencer C.C.A."/>
            <person name="Jones M.C."/>
            <person name="Gillson C."/>
            <person name="Searle S."/>
            <person name="Zhou Y."/>
            <person name="Kokocinski F."/>
            <person name="McDonald L."/>
            <person name="Evans R."/>
            <person name="Phillips K."/>
            <person name="Atkinson A."/>
            <person name="Cooper R."/>
            <person name="Jones C."/>
            <person name="Hall R.E."/>
            <person name="Andrews T.D."/>
            <person name="Lloyd C."/>
            <person name="Ainscough R."/>
            <person name="Almeida J.P."/>
            <person name="Ambrose K.D."/>
            <person name="Anderson F."/>
            <person name="Andrew R.W."/>
            <person name="Ashwell R.I.S."/>
            <person name="Aubin K."/>
            <person name="Babbage A.K."/>
            <person name="Bagguley C.L."/>
            <person name="Bailey J."/>
            <person name="Beasley H."/>
            <person name="Bethel G."/>
            <person name="Bird C.P."/>
            <person name="Bray-Allen S."/>
            <person name="Brown J.Y."/>
            <person name="Brown A.J."/>
            <person name="Buckley D."/>
            <person name="Burton J."/>
            <person name="Bye J."/>
            <person name="Carder C."/>
            <person name="Chapman J.C."/>
            <person name="Clark S.Y."/>
            <person name="Clarke G."/>
            <person name="Clee C."/>
            <person name="Cobley V."/>
            <person name="Collier R.E."/>
            <person name="Corby N."/>
            <person name="Coville G.J."/>
            <person name="Davies J."/>
            <person name="Deadman R."/>
            <person name="Dunn M."/>
            <person name="Earthrowl M."/>
            <person name="Ellington A.G."/>
            <person name="Errington H."/>
            <person name="Frankish A."/>
            <person name="Frankland J."/>
            <person name="French L."/>
            <person name="Garner P."/>
            <person name="Garnett J."/>
            <person name="Gay L."/>
            <person name="Ghori M.R.J."/>
            <person name="Gibson R."/>
            <person name="Gilby L.M."/>
            <person name="Gillett W."/>
            <person name="Glithero R.J."/>
            <person name="Grafham D.V."/>
            <person name="Griffiths C."/>
            <person name="Griffiths-Jones S."/>
            <person name="Grocock R."/>
            <person name="Hammond S."/>
            <person name="Harrison E.S.I."/>
            <person name="Hart E."/>
            <person name="Haugen E."/>
            <person name="Heath P.D."/>
            <person name="Holmes S."/>
            <person name="Holt K."/>
            <person name="Howden P.J."/>
            <person name="Hunt A.R."/>
            <person name="Hunt S.E."/>
            <person name="Hunter G."/>
            <person name="Isherwood J."/>
            <person name="James R."/>
            <person name="Johnson C."/>
            <person name="Johnson D."/>
            <person name="Joy A."/>
            <person name="Kay M."/>
            <person name="Kershaw J.K."/>
            <person name="Kibukawa M."/>
            <person name="Kimberley A.M."/>
            <person name="King A."/>
            <person name="Knights A.J."/>
            <person name="Lad H."/>
            <person name="Laird G."/>
            <person name="Lawlor S."/>
            <person name="Leongamornlert D.A."/>
            <person name="Lloyd D.M."/>
            <person name="Loveland J."/>
            <person name="Lovell J."/>
            <person name="Lush M.J."/>
            <person name="Lyne R."/>
            <person name="Martin S."/>
            <person name="Mashreghi-Mohammadi M."/>
            <person name="Matthews L."/>
            <person name="Matthews N.S.W."/>
            <person name="McLaren S."/>
            <person name="Milne S."/>
            <person name="Mistry S."/>
            <person name="Moore M.J.F."/>
            <person name="Nickerson T."/>
            <person name="O'Dell C.N."/>
            <person name="Oliver K."/>
            <person name="Palmeiri A."/>
            <person name="Palmer S.A."/>
            <person name="Parker A."/>
            <person name="Patel D."/>
            <person name="Pearce A.V."/>
            <person name="Peck A.I."/>
            <person name="Pelan S."/>
            <person name="Phelps K."/>
            <person name="Phillimore B.J."/>
            <person name="Plumb R."/>
            <person name="Rajan J."/>
            <person name="Raymond C."/>
            <person name="Rouse G."/>
            <person name="Saenphimmachak C."/>
            <person name="Sehra H.K."/>
            <person name="Sheridan E."/>
            <person name="Shownkeen R."/>
            <person name="Sims S."/>
            <person name="Skuce C.D."/>
            <person name="Smith M."/>
            <person name="Steward C."/>
            <person name="Subramanian S."/>
            <person name="Sycamore N."/>
            <person name="Tracey A."/>
            <person name="Tromans A."/>
            <person name="Van Helmond Z."/>
            <person name="Wall M."/>
            <person name="Wallis J.M."/>
            <person name="White S."/>
            <person name="Whitehead S.L."/>
            <person name="Wilkinson J.E."/>
            <person name="Willey D.L."/>
            <person name="Williams H."/>
            <person name="Wilming L."/>
            <person name="Wray P.W."/>
            <person name="Wu Z."/>
            <person name="Coulson A."/>
            <person name="Vaudin M."/>
            <person name="Sulston J.E."/>
            <person name="Durbin R.M."/>
            <person name="Hubbard T."/>
            <person name="Wooster R."/>
            <person name="Dunham I."/>
            <person name="Carter N.P."/>
            <person name="McVean G."/>
            <person name="Ross M.T."/>
            <person name="Harrow J."/>
            <person name="Olson M.V."/>
            <person name="Beck S."/>
            <person name="Rogers J."/>
            <person name="Bentley D.R."/>
        </authorList>
    </citation>
    <scope>NUCLEOTIDE SEQUENCE [LARGE SCALE GENOMIC DNA]</scope>
</reference>
<reference key="2">
    <citation type="journal article" date="2004" name="Genome Res.">
        <title>The status, quality, and expansion of the NIH full-length cDNA project: the Mammalian Gene Collection (MGC).</title>
        <authorList>
            <consortium name="The MGC Project Team"/>
        </authorList>
    </citation>
    <scope>NUCLEOTIDE SEQUENCE [LARGE SCALE MRNA]</scope>
    <source>
        <tissue>Brain</tissue>
    </source>
</reference>
<gene>
    <name type="primary">NCMAP</name>
    <name type="synonym">C1orf130</name>
</gene>
<feature type="chain" id="PRO_0000265078" description="Noncompact myelin-associated protein">
    <location>
        <begin position="1"/>
        <end position="102"/>
    </location>
</feature>
<feature type="topological domain" description="Extracellular" evidence="2">
    <location>
        <begin position="1"/>
        <end position="30"/>
    </location>
</feature>
<feature type="transmembrane region" description="Helical" evidence="2">
    <location>
        <begin position="31"/>
        <end position="51"/>
    </location>
</feature>
<feature type="topological domain" description="Cytoplasmic" evidence="2">
    <location>
        <begin position="52"/>
        <end position="102"/>
    </location>
</feature>
<feature type="region of interest" description="Disordered" evidence="3">
    <location>
        <begin position="60"/>
        <end position="102"/>
    </location>
</feature>
<feature type="compositionally biased region" description="Polar residues" evidence="3">
    <location>
        <begin position="78"/>
        <end position="92"/>
    </location>
</feature>
<comment type="function">
    <text evidence="1">Plays a role in myelin formation.</text>
</comment>
<comment type="subcellular location">
    <subcellularLocation>
        <location evidence="1">Cell membrane</location>
        <topology evidence="1">Single-pass type I membrane protein</topology>
    </subcellularLocation>
    <text evidence="1">Localized mainly in the Schmidt-Lanterman incisures and paranodes of noncompact peripheral nerve myelin.</text>
</comment>
<comment type="PTM">
    <text evidence="1">Glycosylated.</text>
</comment>
<sequence length="102" mass="11082">MTTATPLGDTTFFSLNMTTRGEDFLYKSSGAIVAAVVVVVIIIFTVVLILLKMYNRKMRTRRELEPKGPKPTAPSAVGPNSNGSQHPATVTFSPVDVQVETR</sequence>
<accession>Q5T1S8</accession>
<accession>A0PK04</accession>
<accession>B2RV34</accession>